<gene>
    <name type="primary">CD151</name>
    <name type="synonym">TSPAN24</name>
</gene>
<protein>
    <recommendedName>
        <fullName>CD151 antigen</fullName>
    </recommendedName>
    <alternativeName>
        <fullName>GP27</fullName>
    </alternativeName>
    <alternativeName>
        <fullName>Membrane glycoprotein SFA-1</fullName>
    </alternativeName>
    <alternativeName>
        <fullName>Platelet-endothelial tetraspan antigen 3</fullName>
        <shortName>PETA-3</shortName>
    </alternativeName>
    <alternativeName>
        <fullName>Tetraspanin-24</fullName>
        <shortName>Tspan-24</shortName>
    </alternativeName>
    <cdAntigenName>CD151</cdAntigenName>
</protein>
<feature type="chain" id="PRO_0000219230" description="CD151 antigen">
    <location>
        <begin position="1"/>
        <end position="253"/>
    </location>
</feature>
<feature type="topological domain" description="Cytoplasmic" evidence="1">
    <location>
        <begin position="1"/>
        <end position="18"/>
    </location>
</feature>
<feature type="transmembrane region" description="Helical" evidence="1">
    <location>
        <begin position="19"/>
        <end position="39"/>
    </location>
</feature>
<feature type="topological domain" description="Extracellular" evidence="1">
    <location>
        <begin position="40"/>
        <end position="57"/>
    </location>
</feature>
<feature type="transmembrane region" description="Helical" evidence="1">
    <location>
        <begin position="58"/>
        <end position="78"/>
    </location>
</feature>
<feature type="topological domain" description="Cytoplasmic" evidence="1">
    <location>
        <begin position="79"/>
        <end position="91"/>
    </location>
</feature>
<feature type="transmembrane region" description="Helical" evidence="1">
    <location>
        <begin position="92"/>
        <end position="112"/>
    </location>
</feature>
<feature type="topological domain" description="Extracellular" evidence="1">
    <location>
        <begin position="113"/>
        <end position="221"/>
    </location>
</feature>
<feature type="transmembrane region" description="Helical" evidence="1">
    <location>
        <begin position="222"/>
        <end position="242"/>
    </location>
</feature>
<feature type="topological domain" description="Cytoplasmic" evidence="1">
    <location>
        <begin position="243"/>
        <end position="253"/>
    </location>
</feature>
<feature type="lipid moiety-binding region" description="S-palmitoyl cysteine" evidence="3">
    <location>
        <position position="11"/>
    </location>
</feature>
<feature type="lipid moiety-binding region" description="S-palmitoyl cysteine" evidence="3">
    <location>
        <position position="15"/>
    </location>
</feature>
<feature type="lipid moiety-binding region" description="S-palmitoyl cysteine" evidence="3">
    <location>
        <position position="242"/>
    </location>
</feature>
<feature type="lipid moiety-binding region" description="S-palmitoyl cysteine" evidence="3">
    <location>
        <position position="243"/>
    </location>
</feature>
<feature type="glycosylation site" description="N-linked (GlcNAc...) asparagine" evidence="1">
    <location>
        <position position="159"/>
    </location>
</feature>
<feature type="sequence variant" id="VAR_025098" description="In dbSNP:rs34215390." evidence="18">
    <original>T</original>
    <variation>M</variation>
    <location>
        <position position="120"/>
    </location>
</feature>
<feature type="sequence variant" id="VAR_012490" evidence="2 17">
    <original>K</original>
    <variation>R</variation>
    <location>
        <position position="132"/>
    </location>
</feature>
<feature type="sequence variant" id="VAR_012491" description="In dbSNP:rs1431926999." evidence="2 17">
    <original>P</original>
    <variation>S</variation>
    <location>
        <position position="137"/>
    </location>
</feature>
<feature type="sequence variant" id="VAR_021153" description="In dbSNP:rs779114765." evidence="4">
    <original>R</original>
    <variation>H</variation>
    <location>
        <position position="178"/>
    </location>
</feature>
<feature type="mutagenesis site" description="Complete loss of RNF128-mediated ubiquitination; when associated with R-8 and R-17." evidence="7">
    <original>K</original>
    <variation>R</variation>
    <location>
        <position position="7"/>
    </location>
</feature>
<feature type="mutagenesis site" description="Complete loss of RNF128-mediated ubiquitination; when associated with R-7 and R-17." evidence="7">
    <original>K</original>
    <variation>R</variation>
    <location>
        <position position="8"/>
    </location>
</feature>
<feature type="mutagenesis site" description="Complete loss of RNF128-mediated ubiquitination; when associated with R-7 and R-8." evidence="7">
    <original>K</original>
    <variation>R</variation>
    <location>
        <position position="17"/>
    </location>
</feature>
<feature type="mutagenesis site" description="Unable to modulate the glycosylation pattern of integrin ITGA3 subunit." evidence="8">
    <original>N</original>
    <variation>Q</variation>
    <location>
        <position position="159"/>
    </location>
</feature>
<reference key="1">
    <citation type="journal article" date="1995" name="Blood">
        <title>Molecular cloning of cDNA encoding a novel platelet-endothelial cell tetra-span antigen, PETA-3.</title>
        <authorList>
            <person name="Fitter S."/>
            <person name="Tetaz T.J."/>
            <person name="Berndt M.C."/>
            <person name="Ashman L.K."/>
        </authorList>
    </citation>
    <scope>NUCLEOTIDE SEQUENCE [MRNA]</scope>
    <source>
        <tissue>Platelet</tissue>
    </source>
</reference>
<reference key="2">
    <citation type="journal article" date="1996" name="J. Virol.">
        <title>SFA-1, a novel cellular gene induced by human T-cell leukemia virus type 1, is a member of the transmembrane 4 superfamily.</title>
        <authorList>
            <person name="Hasegawa H."/>
            <person name="Utsunomiya Y."/>
            <person name="Kishimoto K."/>
            <person name="Yanagisawa K."/>
            <person name="Fujita S."/>
        </authorList>
    </citation>
    <scope>NUCLEOTIDE SEQUENCE [MRNA]</scope>
    <scope>VARIANTS ARG-132 AND SER-137</scope>
</reference>
<reference key="3">
    <citation type="journal article" date="2001" name="Biochem. Biophys. Res. Commun.">
        <title>Genomic organization, amplification, fine mapping, and intragenic polymorphisms of the human hemidesmosomal tetraspanin CD151 gene.</title>
        <authorList>
            <person name="Whittock N.V."/>
            <person name="McLean W.H.I."/>
        </authorList>
    </citation>
    <scope>NUCLEOTIDE SEQUENCE [GENOMIC DNA]</scope>
    <scope>VARIANTS ARG-132 AND SER-137</scope>
</reference>
<reference key="4">
    <citation type="submission" date="2004-10" db="EMBL/GenBank/DDBJ databases">
        <title>Cloning of human full-length CDSs in BD Creator(TM) system donor vector.</title>
        <authorList>
            <person name="Kalnine N."/>
            <person name="Chen X."/>
            <person name="Rolfs A."/>
            <person name="Halleck A."/>
            <person name="Hines L."/>
            <person name="Eisenstein S."/>
            <person name="Koundinya M."/>
            <person name="Raphael J."/>
            <person name="Moreira D."/>
            <person name="Kelley T."/>
            <person name="LaBaer J."/>
            <person name="Lin Y."/>
            <person name="Phelan M."/>
            <person name="Farmer A."/>
        </authorList>
    </citation>
    <scope>NUCLEOTIDE SEQUENCE [LARGE SCALE MRNA]</scope>
</reference>
<reference key="5">
    <citation type="submission" date="2004-06" db="EMBL/GenBank/DDBJ databases">
        <title>Cloning of human full open reading frames in Gateway(TM) system entry vector (pDONR201).</title>
        <authorList>
            <person name="Ebert L."/>
            <person name="Schick M."/>
            <person name="Neubert P."/>
            <person name="Schatten R."/>
            <person name="Henze S."/>
            <person name="Korn B."/>
        </authorList>
    </citation>
    <scope>NUCLEOTIDE SEQUENCE [LARGE SCALE MRNA]</scope>
</reference>
<reference key="6">
    <citation type="submission" date="2004-06" db="EMBL/GenBank/DDBJ databases">
        <title>Cloning of human full open reading frames in Gateway(TM) system entry vector (pDONR201).</title>
        <authorList>
            <person name="Halleck A."/>
            <person name="Ebert L."/>
            <person name="Mkoundinya M."/>
            <person name="Schick M."/>
            <person name="Eisenstein S."/>
            <person name="Neubert P."/>
            <person name="Kstrang K."/>
            <person name="Schatten R."/>
            <person name="Shen B."/>
            <person name="Henze S."/>
            <person name="Mar W."/>
            <person name="Korn B."/>
            <person name="Zuo D."/>
            <person name="Hu Y."/>
            <person name="LaBaer J."/>
        </authorList>
    </citation>
    <scope>NUCLEOTIDE SEQUENCE [LARGE SCALE MRNA]</scope>
</reference>
<reference key="7">
    <citation type="journal article" date="2004" name="Nat. Genet.">
        <title>Complete sequencing and characterization of 21,243 full-length human cDNAs.</title>
        <authorList>
            <person name="Ota T."/>
            <person name="Suzuki Y."/>
            <person name="Nishikawa T."/>
            <person name="Otsuki T."/>
            <person name="Sugiyama T."/>
            <person name="Irie R."/>
            <person name="Wakamatsu A."/>
            <person name="Hayashi K."/>
            <person name="Sato H."/>
            <person name="Nagai K."/>
            <person name="Kimura K."/>
            <person name="Makita H."/>
            <person name="Sekine M."/>
            <person name="Obayashi M."/>
            <person name="Nishi T."/>
            <person name="Shibahara T."/>
            <person name="Tanaka T."/>
            <person name="Ishii S."/>
            <person name="Yamamoto J."/>
            <person name="Saito K."/>
            <person name="Kawai Y."/>
            <person name="Isono Y."/>
            <person name="Nakamura Y."/>
            <person name="Nagahari K."/>
            <person name="Murakami K."/>
            <person name="Yasuda T."/>
            <person name="Iwayanagi T."/>
            <person name="Wagatsuma M."/>
            <person name="Shiratori A."/>
            <person name="Sudo H."/>
            <person name="Hosoiri T."/>
            <person name="Kaku Y."/>
            <person name="Kodaira H."/>
            <person name="Kondo H."/>
            <person name="Sugawara M."/>
            <person name="Takahashi M."/>
            <person name="Kanda K."/>
            <person name="Yokoi T."/>
            <person name="Furuya T."/>
            <person name="Kikkawa E."/>
            <person name="Omura Y."/>
            <person name="Abe K."/>
            <person name="Kamihara K."/>
            <person name="Katsuta N."/>
            <person name="Sato K."/>
            <person name="Tanikawa M."/>
            <person name="Yamazaki M."/>
            <person name="Ninomiya K."/>
            <person name="Ishibashi T."/>
            <person name="Yamashita H."/>
            <person name="Murakawa K."/>
            <person name="Fujimori K."/>
            <person name="Tanai H."/>
            <person name="Kimata M."/>
            <person name="Watanabe M."/>
            <person name="Hiraoka S."/>
            <person name="Chiba Y."/>
            <person name="Ishida S."/>
            <person name="Ono Y."/>
            <person name="Takiguchi S."/>
            <person name="Watanabe S."/>
            <person name="Yosida M."/>
            <person name="Hotuta T."/>
            <person name="Kusano J."/>
            <person name="Kanehori K."/>
            <person name="Takahashi-Fujii A."/>
            <person name="Hara H."/>
            <person name="Tanase T.-O."/>
            <person name="Nomura Y."/>
            <person name="Togiya S."/>
            <person name="Komai F."/>
            <person name="Hara R."/>
            <person name="Takeuchi K."/>
            <person name="Arita M."/>
            <person name="Imose N."/>
            <person name="Musashino K."/>
            <person name="Yuuki H."/>
            <person name="Oshima A."/>
            <person name="Sasaki N."/>
            <person name="Aotsuka S."/>
            <person name="Yoshikawa Y."/>
            <person name="Matsunawa H."/>
            <person name="Ichihara T."/>
            <person name="Shiohata N."/>
            <person name="Sano S."/>
            <person name="Moriya S."/>
            <person name="Momiyama H."/>
            <person name="Satoh N."/>
            <person name="Takami S."/>
            <person name="Terashima Y."/>
            <person name="Suzuki O."/>
            <person name="Nakagawa S."/>
            <person name="Senoh A."/>
            <person name="Mizoguchi H."/>
            <person name="Goto Y."/>
            <person name="Shimizu F."/>
            <person name="Wakebe H."/>
            <person name="Hishigaki H."/>
            <person name="Watanabe T."/>
            <person name="Sugiyama A."/>
            <person name="Takemoto M."/>
            <person name="Kawakami B."/>
            <person name="Yamazaki M."/>
            <person name="Watanabe K."/>
            <person name="Kumagai A."/>
            <person name="Itakura S."/>
            <person name="Fukuzumi Y."/>
            <person name="Fujimori Y."/>
            <person name="Komiyama M."/>
            <person name="Tashiro H."/>
            <person name="Tanigami A."/>
            <person name="Fujiwara T."/>
            <person name="Ono T."/>
            <person name="Yamada K."/>
            <person name="Fujii Y."/>
            <person name="Ozaki K."/>
            <person name="Hirao M."/>
            <person name="Ohmori Y."/>
            <person name="Kawabata A."/>
            <person name="Hikiji T."/>
            <person name="Kobatake N."/>
            <person name="Inagaki H."/>
            <person name="Ikema Y."/>
            <person name="Okamoto S."/>
            <person name="Okitani R."/>
            <person name="Kawakami T."/>
            <person name="Noguchi S."/>
            <person name="Itoh T."/>
            <person name="Shigeta K."/>
            <person name="Senba T."/>
            <person name="Matsumura K."/>
            <person name="Nakajima Y."/>
            <person name="Mizuno T."/>
            <person name="Morinaga M."/>
            <person name="Sasaki M."/>
            <person name="Togashi T."/>
            <person name="Oyama M."/>
            <person name="Hata H."/>
            <person name="Watanabe M."/>
            <person name="Komatsu T."/>
            <person name="Mizushima-Sugano J."/>
            <person name="Satoh T."/>
            <person name="Shirai Y."/>
            <person name="Takahashi Y."/>
            <person name="Nakagawa K."/>
            <person name="Okumura K."/>
            <person name="Nagase T."/>
            <person name="Nomura N."/>
            <person name="Kikuchi H."/>
            <person name="Masuho Y."/>
            <person name="Yamashita R."/>
            <person name="Nakai K."/>
            <person name="Yada T."/>
            <person name="Nakamura Y."/>
            <person name="Ohara O."/>
            <person name="Isogai T."/>
            <person name="Sugano S."/>
        </authorList>
    </citation>
    <scope>NUCLEOTIDE SEQUENCE [LARGE SCALE MRNA]</scope>
    <source>
        <tissue>Uterus</tissue>
    </source>
</reference>
<reference key="8">
    <citation type="submission" date="2005-05" db="EMBL/GenBank/DDBJ databases">
        <authorList>
            <consortium name="SeattleSNPs variation discovery resource"/>
        </authorList>
    </citation>
    <scope>NUCLEOTIDE SEQUENCE [GENOMIC DNA]</scope>
    <scope>VARIANT MET-120</scope>
</reference>
<reference key="9">
    <citation type="journal article" date="2006" name="Nature">
        <title>Human chromosome 11 DNA sequence and analysis including novel gene identification.</title>
        <authorList>
            <person name="Taylor T.D."/>
            <person name="Noguchi H."/>
            <person name="Totoki Y."/>
            <person name="Toyoda A."/>
            <person name="Kuroki Y."/>
            <person name="Dewar K."/>
            <person name="Lloyd C."/>
            <person name="Itoh T."/>
            <person name="Takeda T."/>
            <person name="Kim D.-W."/>
            <person name="She X."/>
            <person name="Barlow K.F."/>
            <person name="Bloom T."/>
            <person name="Bruford E."/>
            <person name="Chang J.L."/>
            <person name="Cuomo C.A."/>
            <person name="Eichler E."/>
            <person name="FitzGerald M.G."/>
            <person name="Jaffe D.B."/>
            <person name="LaButti K."/>
            <person name="Nicol R."/>
            <person name="Park H.-S."/>
            <person name="Seaman C."/>
            <person name="Sougnez C."/>
            <person name="Yang X."/>
            <person name="Zimmer A.R."/>
            <person name="Zody M.C."/>
            <person name="Birren B.W."/>
            <person name="Nusbaum C."/>
            <person name="Fujiyama A."/>
            <person name="Hattori M."/>
            <person name="Rogers J."/>
            <person name="Lander E.S."/>
            <person name="Sakaki Y."/>
        </authorList>
    </citation>
    <scope>NUCLEOTIDE SEQUENCE [LARGE SCALE GENOMIC DNA]</scope>
</reference>
<reference key="10">
    <citation type="submission" date="2005-07" db="EMBL/GenBank/DDBJ databases">
        <authorList>
            <person name="Mural R.J."/>
            <person name="Istrail S."/>
            <person name="Sutton G.G."/>
            <person name="Florea L."/>
            <person name="Halpern A.L."/>
            <person name="Mobarry C.M."/>
            <person name="Lippert R."/>
            <person name="Walenz B."/>
            <person name="Shatkay H."/>
            <person name="Dew I."/>
            <person name="Miller J.R."/>
            <person name="Flanigan M.J."/>
            <person name="Edwards N.J."/>
            <person name="Bolanos R."/>
            <person name="Fasulo D."/>
            <person name="Halldorsson B.V."/>
            <person name="Hannenhalli S."/>
            <person name="Turner R."/>
            <person name="Yooseph S."/>
            <person name="Lu F."/>
            <person name="Nusskern D.R."/>
            <person name="Shue B.C."/>
            <person name="Zheng X.H."/>
            <person name="Zhong F."/>
            <person name="Delcher A.L."/>
            <person name="Huson D.H."/>
            <person name="Kravitz S.A."/>
            <person name="Mouchard L."/>
            <person name="Reinert K."/>
            <person name="Remington K.A."/>
            <person name="Clark A.G."/>
            <person name="Waterman M.S."/>
            <person name="Eichler E.E."/>
            <person name="Adams M.D."/>
            <person name="Hunkapiller M.W."/>
            <person name="Myers E.W."/>
            <person name="Venter J.C."/>
        </authorList>
    </citation>
    <scope>NUCLEOTIDE SEQUENCE [LARGE SCALE GENOMIC DNA]</scope>
</reference>
<reference key="11">
    <citation type="journal article" date="2004" name="Genome Res.">
        <title>The status, quality, and expansion of the NIH full-length cDNA project: the Mammalian Gene Collection (MGC).</title>
        <authorList>
            <consortium name="The MGC Project Team"/>
        </authorList>
    </citation>
    <scope>NUCLEOTIDE SEQUENCE [LARGE SCALE MRNA]</scope>
    <source>
        <tissue>Colon</tissue>
        <tissue>Kidney</tissue>
    </source>
</reference>
<reference key="12">
    <citation type="journal article" date="2002" name="Mol. Biol. Cell">
        <title>Palmitoylation of tetraspanin proteins: modulation of CD151 lateral interactions, subcellular distribution, and integrin-dependent cell morphology.</title>
        <authorList>
            <person name="Yang X."/>
            <person name="Claas C."/>
            <person name="Kraeft S.K."/>
            <person name="Chen L.B."/>
            <person name="Wang Z."/>
            <person name="Kreidberg J.A."/>
            <person name="Hemler M.E."/>
        </authorList>
    </citation>
    <scope>PALMITOYLATION AT CYS-11; CYS-15; CYS-242 AND CYS-243</scope>
    <scope>INTERACTION WITH CD9; CD181 AND INTEGRINS ITGA3:ITGB1; ITGA5:ITGB1; ITGA3:ITGB1 AND ITGA6:ITGB4</scope>
</reference>
<reference key="13">
    <citation type="journal article" date="2004" name="Blood">
        <title>CD151, the first member of the tetraspanin (TM4) superfamily detected on erythrocytes, is essential for the correct assembly of human basement membranes in kidney and skin.</title>
        <authorList>
            <person name="Karamatic Crew V."/>
            <person name="Burton N."/>
            <person name="Kagan A."/>
            <person name="Green C.A."/>
            <person name="Levene C."/>
            <person name="Flinter F."/>
            <person name="Brady R.L."/>
            <person name="Daniels G."/>
            <person name="Anstee D.J."/>
        </authorList>
    </citation>
    <scope>FUNCTION</scope>
    <scope>TISSUE SPECIFICITY</scope>
    <scope>INVOLVEMENT IN RAPH BLOOD GROUP SYSTEM</scope>
    <scope>INVOLVEMENT IN EBS7</scope>
    <scope>VARIANT HIS-178</scope>
</reference>
<reference key="14">
    <citation type="journal article" date="2007" name="Int. J. Biochem. Cell Biol.">
        <title>Activation of the phosphatidylinositol 3-kinase/protein kinase Akt pathway mediates CD151-induced endothelial cell proliferation and cell migration.</title>
        <authorList>
            <person name="Zheng Z.Z."/>
            <person name="Liu Z.X."/>
        </authorList>
    </citation>
    <scope>FUNCTION</scope>
</reference>
<reference key="15">
    <citation type="journal article" date="2008" name="J. Biol. Chem.">
        <title>The single subunit transmembrane E3 ligase gene related to anergy in lymphocytes (GRAIL) captures and then ubiquitinates transmembrane proteins across the cell membrane.</title>
        <authorList>
            <person name="Lineberry N."/>
            <person name="Su L."/>
            <person name="Soares L."/>
            <person name="Fathman C.G."/>
        </authorList>
    </citation>
    <scope>UBIQUITINATION BY RNF128</scope>
    <scope>MUTAGENESIS OF LYS-7; LYS-8 AND LYS-17</scope>
</reference>
<reference key="16">
    <citation type="journal article" date="2008" name="J. Biol. Chem.">
        <title>Tetraspanin CD151 regulates glycosylation of (alpha)3(beta)1 integrin.</title>
        <authorList>
            <person name="Baldwin G."/>
            <person name="Novitskaya V."/>
            <person name="Sadej R."/>
            <person name="Pochec E."/>
            <person name="Litynska A."/>
            <person name="Hartmann C."/>
            <person name="Williams J."/>
            <person name="Ashman L."/>
            <person name="Eble J.A."/>
            <person name="Berditchevski F."/>
        </authorList>
    </citation>
    <scope>FUNCTION</scope>
    <scope>MUTAGENESIS OF ASN-159</scope>
    <scope>INTERACTION WITH INTEGRIN ITGA3</scope>
</reference>
<reference key="17">
    <citation type="journal article" date="2008" name="Mol. Biol. Cell">
        <title>DHHC2 affects palmitoylation, stability, and functions of tetraspanins CD9 and CD151.</title>
        <authorList>
            <person name="Sharma C."/>
            <person name="Yang X.H."/>
            <person name="Hemler M.E."/>
        </authorList>
    </citation>
    <scope>PALMITOYLATION</scope>
</reference>
<reference key="18">
    <citation type="journal article" date="2011" name="BMC Syst. Biol.">
        <title>Initial characterization of the human central proteome.</title>
        <authorList>
            <person name="Burkard T.R."/>
            <person name="Planyavsky M."/>
            <person name="Kaupe I."/>
            <person name="Breitwieser F.P."/>
            <person name="Buerckstuemmer T."/>
            <person name="Bennett K.L."/>
            <person name="Superti-Furga G."/>
            <person name="Colinge J."/>
        </authorList>
    </citation>
    <scope>IDENTIFICATION BY MASS SPECTROMETRY [LARGE SCALE ANALYSIS]</scope>
</reference>
<reference key="19">
    <citation type="journal article" date="2012" name="J. Biol. Chem.">
        <title>Tetraspanin CD151 stimulates adhesion-dependent activation of Ras, Rac, and Cdc42 by facilitating molecular association between beta1 integrins and small GTPases.</title>
        <authorList>
            <person name="Hong I.K."/>
            <person name="Jeoung D.I."/>
            <person name="Ha K.S."/>
            <person name="Kim Y.M."/>
            <person name="Lee H."/>
        </authorList>
    </citation>
    <scope>FUNCTION</scope>
    <scope>SUBCELLULAR LOCATION</scope>
    <scope>INTERACTION WITH RAC1 AND CDC42</scope>
</reference>
<reference key="20">
    <citation type="journal article" date="2014" name="J. Proteomics">
        <title>An enzyme assisted RP-RPLC approach for in-depth analysis of human liver phosphoproteome.</title>
        <authorList>
            <person name="Bian Y."/>
            <person name="Song C."/>
            <person name="Cheng K."/>
            <person name="Dong M."/>
            <person name="Wang F."/>
            <person name="Huang J."/>
            <person name="Sun D."/>
            <person name="Wang L."/>
            <person name="Ye M."/>
            <person name="Zou H."/>
        </authorList>
    </citation>
    <scope>IDENTIFICATION BY MASS SPECTROMETRY [LARGE SCALE ANALYSIS]</scope>
    <source>
        <tissue>Liver</tissue>
    </source>
</reference>
<reference key="21">
    <citation type="journal article" date="2014" name="Eur. J. Immunol.">
        <title>Tetraspanins CD9 and CD151 at the immune synapse support T-cell integrin signaling.</title>
        <authorList>
            <person name="Rocha-Perugini V."/>
            <person name="Gonzalez-Granado J.M."/>
            <person name="Tejera E."/>
            <person name="Lopez-Martin S."/>
            <person name="Yanez-Mo M."/>
            <person name="Sanchez-Madrid F."/>
        </authorList>
    </citation>
    <scope>FUNCTION</scope>
    <scope>SUBCELLULAR LOCATION</scope>
</reference>
<reference key="22">
    <citation type="journal article" date="2014" name="Viruses">
        <title>The tetraspanin CD151 in papillomavirus infection.</title>
        <authorList>
            <person name="Scheffer K.D."/>
            <person name="Berditchevski F."/>
            <person name="Florin L."/>
        </authorList>
    </citation>
    <scope>FUNCTION (MICROBIAL INFECTION)</scope>
</reference>
<reference key="23">
    <citation type="journal article" date="2016" name="J. Virol.">
        <title>Tetraspanin CD151 Promotes Initial Events in Human Cytomegalovirus Infection.</title>
        <authorList>
            <person name="Hochdorfer D."/>
            <person name="Florin L."/>
            <person name="Sinzger C."/>
            <person name="Lieber D."/>
        </authorList>
    </citation>
    <scope>FUNCTION (MICROBIAL INFECTION)</scope>
</reference>
<reference key="24">
    <citation type="journal article" date="2017" name="Biochem. J.">
        <title>The CD9, CD81, and CD151 EC2 domains bind to the classical RGD-binding site of integrin alphavbeta3.</title>
        <authorList>
            <person name="Yu J."/>
            <person name="Lee C.Y."/>
            <person name="Changou C.A."/>
            <person name="Cedano-Prieto D.M."/>
            <person name="Takada Y.K."/>
            <person name="Takada Y."/>
        </authorList>
    </citation>
    <scope>INTERACTION WITH INTEGRIN ITGAV:ITGB3</scope>
</reference>
<reference key="25">
    <citation type="journal article" date="2019" name="J. Cell Sci.">
        <title>Tetraspanin CD151 and integrin alpha3beta1 contribute to the stabilization of integrin alpha6beta4-containing cell-matrix adhesions.</title>
        <authorList>
            <person name="Te Molder L."/>
            <person name="Juksar J."/>
            <person name="Harkes R."/>
            <person name="Wang W."/>
            <person name="Kreft M."/>
            <person name="Sonnenberg A."/>
        </authorList>
    </citation>
    <scope>FUNCTION</scope>
    <scope>INTERACTION WITH INTEGRINS ITGA3:ITGB1 AND ITGA6:ITGB4</scope>
</reference>
<reference key="26">
    <citation type="journal article" date="2020" name="Sci. Rep.">
        <title>The tetraspanin CD151 marks a unique population of activated human T cells.</title>
        <authorList>
            <person name="Perez M.D."/>
            <person name="Seu L."/>
            <person name="Lowman K.E."/>
            <person name="Moylan D.C."/>
            <person name="Tidwell C."/>
            <person name="Samuel S."/>
            <person name="Duverger A."/>
            <person name="Wagner F.H."/>
            <person name="Carlin E."/>
            <person name="Sharma V."/>
            <person name="Pope B."/>
            <person name="Raman C."/>
            <person name="Erdmann N."/>
            <person name="Locke J."/>
            <person name="Hu H."/>
            <person name="Sabbaj S."/>
            <person name="Kutsch O."/>
        </authorList>
    </citation>
    <scope>TISSUE SPECIFICITY</scope>
    <scope>INDUCTION BY TCR ACTIVATION</scope>
</reference>
<reference key="27">
    <citation type="journal article" date="2022" name="Cell. Mol. Life Sci.">
        <title>JAM-A interacts with alpha3beta1 integrin and tetraspanins CD151 and CD9 to regulate collective cell migration of polarized epithelial cells.</title>
        <authorList>
            <person name="Thoelmann S."/>
            <person name="Seebach J."/>
            <person name="Otani T."/>
            <person name="Florin L."/>
            <person name="Schnittler H."/>
            <person name="Gerke V."/>
            <person name="Furuse M."/>
            <person name="Ebnet K."/>
        </authorList>
    </citation>
    <scope>FUNCTION</scope>
    <scope>INTERACTION WITH F11R</scope>
</reference>
<proteinExistence type="evidence at protein level"/>
<comment type="function">
    <text evidence="4 5 8 9 11 14 16">Structural component of specialized membrane microdomains known as tetraspanin-enriched microdomains (TERMs), which act as platforms for receptor clustering and signaling. Plays a role in various cellular and molecular mechanism through its association with both integrin and non-integrin proteins. These interactions facilitate critical cellular functions, including cell-to-cell communication, wound healing, platelet aggregation, trafficking, cell motility, and angiogenesis (PubMed:17045834, PubMed:24723389, PubMed:31488507). Via interaction with JAM-A/F11R and integrin ITGA3:ITGB1, promotes the recruitment of signaling molecules such as RAC1, CDC42 and RhoGTPases to facilitate the polarization of epithelial cells and the reorganization of the actin cytoskeleton, which are critical steps in cell migration process (PubMed:22843693, PubMed:35067832). Regulates the glycosylation pattern of ITGA3:ITGB1 thereby modulating its activity (PubMed:18852263). Plays an essential role in the maintenance of central laminin-binding integrin ITGA6:ITGB4-containing adhesion complexes (PubMed:31488507). Essential for the proper assembly of the glomerular and tubular basement membranes in kidney (PubMed:15265795). Contributes to T-cell activation by modulating integrin signaling leading to activation of downstream targets PTK2 and MAPK1/MAPK3 (PubMed:24723389).</text>
</comment>
<comment type="function">
    <text evidence="10">(Microbial infection) Plays a role in human papillomavirus 16/HPV-16 endocytosis upon binding to cell surface receptor.</text>
</comment>
<comment type="function">
    <text evidence="12">(Microbial infection) Plays a role in human cytomegalovirus entry into host cell by contributing to entry receptor binding, membrane fusion, or release of the capsid.</text>
</comment>
<comment type="subunit">
    <text evidence="3 8 9 13 14 16">Interacts with integrins ITGA3:ITGB1, ITGA5:ITGB1, ITGA3:ITGB1 and ITGA6:ITGB4 and with CD9 and CD181 (PubMed:11907260, PubMed:31488507). Interacts (via the second extracellular domain) with integrin ITGAV:ITGB3 (PubMed:27993971). Interacts with ITGA3; this interaction modulates ITGA3 glycosylation pattern (PubMed:18852263). Interacts with F11R (PubMed:35067832). Interacts with RAC1 and CDC42; these interactions mediate physical association of RAC1 and CDC42 with integrin adhesion receptor complexes (PubMed:22843693).</text>
</comment>
<comment type="interaction">
    <interactant intactId="EBI-10210332">
        <id>P48509</id>
    </interactant>
    <interactant intactId="EBI-11343438">
        <id>Q3SXY8</id>
        <label>ARL13B</label>
    </interactant>
    <organismsDiffer>false</organismsDiffer>
    <experiments>3</experiments>
</comment>
<comment type="interaction">
    <interactant intactId="EBI-10210332">
        <id>P48509</id>
    </interactant>
    <interactant intactId="EBI-7054335">
        <id>Q8IYS0</id>
        <label>GRAMD1C</label>
    </interactant>
    <organismsDiffer>false</organismsDiffer>
    <experiments>11</experiments>
</comment>
<comment type="interaction">
    <interactant intactId="EBI-10210332">
        <id>P48509</id>
    </interactant>
    <interactant intactId="EBI-2550768">
        <id>P26006</id>
        <label>ITGA3</label>
    </interactant>
    <organismsDiffer>false</organismsDiffer>
    <experiments>7</experiments>
</comment>
<comment type="interaction">
    <interactant intactId="EBI-10210332">
        <id>P48509</id>
    </interactant>
    <interactant intactId="EBI-2436548">
        <id>P23229</id>
        <label>ITGA6</label>
    </interactant>
    <organismsDiffer>false</organismsDiffer>
    <experiments>5</experiments>
</comment>
<comment type="interaction">
    <interactant intactId="EBI-10210332">
        <id>P48509</id>
    </interactant>
    <interactant intactId="EBI-948678">
        <id>P16144</id>
        <label>ITGB4</label>
    </interactant>
    <organismsDiffer>false</organismsDiffer>
    <experiments>3</experiments>
</comment>
<comment type="interaction">
    <interactant intactId="EBI-10210332">
        <id>P48509</id>
    </interactant>
    <interactant intactId="EBI-9018187">
        <id>P26715</id>
        <label>KLRC1</label>
    </interactant>
    <organismsDiffer>false</organismsDiffer>
    <experiments>3</experiments>
</comment>
<comment type="interaction">
    <interactant intactId="EBI-10210332">
        <id>P48509</id>
    </interactant>
    <interactant intactId="EBI-7238458">
        <id>Q8IV31</id>
        <label>TMEM139</label>
    </interactant>
    <organismsDiffer>false</organismsDiffer>
    <experiments>3</experiments>
</comment>
<comment type="interaction">
    <interactant intactId="EBI-10210332">
        <id>P48509</id>
    </interactant>
    <interactant intactId="EBI-17670824">
        <id>Q8WUV1</id>
        <label>TSPAN18</label>
    </interactant>
    <organismsDiffer>false</organismsDiffer>
    <experiments>3</experiments>
</comment>
<comment type="subcellular location">
    <subcellularLocation>
        <location evidence="9 11">Cell membrane</location>
        <topology>Multi-pass membrane protein</topology>
    </subcellularLocation>
    <text evidence="11">Relocalizes to the immune synapse in T-cells upon activation.</text>
</comment>
<comment type="tissue specificity">
    <text evidence="4 15">Expressed in a variety of tissues including vascular endothelium and epidermis. Expressed on erythroid cells, with a higher level of expression in erythroid precursors than on mature erythrocytes (PubMed:15265795). Acts as a sensitive T-cell activation marker (PubMed:32978478).</text>
</comment>
<comment type="induction">
    <text evidence="15">On both CD4 and CD8 T-cells following TCR/CD3 activation.</text>
</comment>
<comment type="PTM">
    <text evidence="6">Palmitoylated. Palmitoylation by ZDHHC2 regulates CD151 expression, association with other tetraspanin family proteins and function in cell adhesion.</text>
</comment>
<comment type="PTM">
    <text evidence="7">Ubiquitinated by RNF128 on lysine residues present in the tetraspanin amino terminus via 'Lys-48'-linked ubiquitin leading to proteasomal degradation.</text>
</comment>
<comment type="polymorphism">
    <text evidence="4">CD151 defines the MER2=RAPH1 antigen of the RAPH blood group system. 92% of Caucasians are MER2-positive and 8% are apparently MER2-negative.</text>
</comment>
<comment type="disease" evidence="4">
    <disease id="DI-00808">
        <name>Epidermolysis bullosa simplex 7, with nephropathy and deafness</name>
        <acronym>EBS7</acronym>
        <description>A form of epidermolysis bullosa, a genodermatosis characterized by recurrent blistering, fragility of the skin and mucosal epithelia, and erosions caused by minor mechanical trauma. EBS7 is an autosomal recessive disorder characterized by the association of skin blistering, hereditary nephritis, sensorineural deafness, and beta-thalassemia minor. Skin blistering is present at birth, particularly in the tibial area but also scattered on other parts of the body.</description>
        <dbReference type="MIM" id="609057"/>
    </disease>
    <text>The disease is caused by variants affecting the gene represented in this entry.</text>
</comment>
<comment type="similarity">
    <text evidence="19">Belongs to the tetraspanin (TM4SF) family.</text>
</comment>
<comment type="online information" name="Atlas of Genetics and Cytogenetics in Oncology and Haematology">
    <link uri="https://atlasgeneticsoncology.org/gene/967/CD151"/>
</comment>
<organism>
    <name type="scientific">Homo sapiens</name>
    <name type="common">Human</name>
    <dbReference type="NCBI Taxonomy" id="9606"/>
    <lineage>
        <taxon>Eukaryota</taxon>
        <taxon>Metazoa</taxon>
        <taxon>Chordata</taxon>
        <taxon>Craniata</taxon>
        <taxon>Vertebrata</taxon>
        <taxon>Euteleostomi</taxon>
        <taxon>Mammalia</taxon>
        <taxon>Eutheria</taxon>
        <taxon>Euarchontoglires</taxon>
        <taxon>Primates</taxon>
        <taxon>Haplorrhini</taxon>
        <taxon>Catarrhini</taxon>
        <taxon>Hominidae</taxon>
        <taxon>Homo</taxon>
    </lineage>
</organism>
<name>CD151_HUMAN</name>
<accession>P48509</accession>
<accession>A8KAK8</accession>
<accession>E9PI15</accession>
<accession>Q14826</accession>
<accession>Q86U54</accession>
<accession>Q96TE3</accession>
<sequence length="253" mass="28295">MGEFNEKKTTCGTVCLKYLLFTYNCCFWLAGLAVMAVGIWTLALKSDYISLLASGTYLATAYILVVAGTVVMVTGVLGCCATFKERRNLLRLYFILLLIIFLLEIIAGILAYAYYQQLNTELKENLKDTMTKRYHQPGHEAVTSAVDQLQQEFHCCGSNNSQDWRDSEWIRSQEAGGRVVPDSCCKTVVALCGQRDHASNIYKVEGGCITKLETFIQEHLRVIGAVGIGIACVQVFGMIFTCCLYRSLKLEHY</sequence>
<evidence type="ECO:0000255" key="1"/>
<evidence type="ECO:0000269" key="2">
    <source>
    </source>
</evidence>
<evidence type="ECO:0000269" key="3">
    <source>
    </source>
</evidence>
<evidence type="ECO:0000269" key="4">
    <source>
    </source>
</evidence>
<evidence type="ECO:0000269" key="5">
    <source>
    </source>
</evidence>
<evidence type="ECO:0000269" key="6">
    <source>
    </source>
</evidence>
<evidence type="ECO:0000269" key="7">
    <source>
    </source>
</evidence>
<evidence type="ECO:0000269" key="8">
    <source>
    </source>
</evidence>
<evidence type="ECO:0000269" key="9">
    <source>
    </source>
</evidence>
<evidence type="ECO:0000269" key="10">
    <source>
    </source>
</evidence>
<evidence type="ECO:0000269" key="11">
    <source>
    </source>
</evidence>
<evidence type="ECO:0000269" key="12">
    <source>
    </source>
</evidence>
<evidence type="ECO:0000269" key="13">
    <source>
    </source>
</evidence>
<evidence type="ECO:0000269" key="14">
    <source>
    </source>
</evidence>
<evidence type="ECO:0000269" key="15">
    <source>
    </source>
</evidence>
<evidence type="ECO:0000269" key="16">
    <source>
    </source>
</evidence>
<evidence type="ECO:0000269" key="17">
    <source>
    </source>
</evidence>
<evidence type="ECO:0000269" key="18">
    <source ref="8"/>
</evidence>
<evidence type="ECO:0000305" key="19"/>
<dbReference type="EMBL" id="U14650">
    <property type="protein sequence ID" value="AAA87064.1"/>
    <property type="molecule type" value="mRNA"/>
</dbReference>
<dbReference type="EMBL" id="D29963">
    <property type="protein sequence ID" value="BAA06229.1"/>
    <property type="molecule type" value="mRNA"/>
</dbReference>
<dbReference type="EMBL" id="AF315942">
    <property type="protein sequence ID" value="AAK14179.1"/>
    <property type="molecule type" value="Genomic_DNA"/>
</dbReference>
<dbReference type="EMBL" id="BT007397">
    <property type="protein sequence ID" value="AAP36061.1"/>
    <property type="molecule type" value="mRNA"/>
</dbReference>
<dbReference type="EMBL" id="BT020132">
    <property type="protein sequence ID" value="AAV38934.1"/>
    <property type="molecule type" value="mRNA"/>
</dbReference>
<dbReference type="EMBL" id="CR456826">
    <property type="protein sequence ID" value="CAG33107.1"/>
    <property type="molecule type" value="mRNA"/>
</dbReference>
<dbReference type="EMBL" id="CR542098">
    <property type="protein sequence ID" value="CAG46895.1"/>
    <property type="molecule type" value="mRNA"/>
</dbReference>
<dbReference type="EMBL" id="AK293073">
    <property type="protein sequence ID" value="BAF85762.1"/>
    <property type="molecule type" value="mRNA"/>
</dbReference>
<dbReference type="EMBL" id="DQ074789">
    <property type="protein sequence ID" value="AAY68211.1"/>
    <property type="molecule type" value="Genomic_DNA"/>
</dbReference>
<dbReference type="EMBL" id="AP006621">
    <property type="status" value="NOT_ANNOTATED_CDS"/>
    <property type="molecule type" value="Genomic_DNA"/>
</dbReference>
<dbReference type="EMBL" id="AP006623">
    <property type="status" value="NOT_ANNOTATED_CDS"/>
    <property type="molecule type" value="Genomic_DNA"/>
</dbReference>
<dbReference type="EMBL" id="CH471158">
    <property type="protein sequence ID" value="EAX02400.1"/>
    <property type="molecule type" value="Genomic_DNA"/>
</dbReference>
<dbReference type="EMBL" id="BC001374">
    <property type="protein sequence ID" value="AAH01374.1"/>
    <property type="molecule type" value="mRNA"/>
</dbReference>
<dbReference type="EMBL" id="BC013302">
    <property type="protein sequence ID" value="AAH13302.1"/>
    <property type="molecule type" value="mRNA"/>
</dbReference>
<dbReference type="CCDS" id="CCDS7719.1"/>
<dbReference type="RefSeq" id="NP_001034579.1">
    <property type="nucleotide sequence ID" value="NM_001039490.2"/>
</dbReference>
<dbReference type="RefSeq" id="NP_004348.2">
    <property type="nucleotide sequence ID" value="NM_004357.4"/>
</dbReference>
<dbReference type="RefSeq" id="NP_620598.1">
    <property type="nucleotide sequence ID" value="NM_139029.2"/>
</dbReference>
<dbReference type="RefSeq" id="NP_620599.1">
    <property type="nucleotide sequence ID" value="NM_139030.4"/>
</dbReference>
<dbReference type="RefSeq" id="XP_024304548.1">
    <property type="nucleotide sequence ID" value="XM_024448780.2"/>
</dbReference>
<dbReference type="RefSeq" id="XP_054226609.1">
    <property type="nucleotide sequence ID" value="XM_054370634.1"/>
</dbReference>
<dbReference type="SMR" id="P48509"/>
<dbReference type="BioGRID" id="107415">
    <property type="interactions" value="70"/>
</dbReference>
<dbReference type="CORUM" id="P48509"/>
<dbReference type="FunCoup" id="P48509">
    <property type="interactions" value="248"/>
</dbReference>
<dbReference type="IntAct" id="P48509">
    <property type="interactions" value="52"/>
</dbReference>
<dbReference type="MINT" id="P48509"/>
<dbReference type="STRING" id="9606.ENSP00000324101"/>
<dbReference type="TCDB" id="8.A.40.1.15">
    <property type="family name" value="the tetraspanin (tetraspanin) family"/>
</dbReference>
<dbReference type="GlyCosmos" id="P48509">
    <property type="glycosylation" value="1 site, No reported glycans"/>
</dbReference>
<dbReference type="GlyGen" id="P48509">
    <property type="glycosylation" value="4 sites, 1 O-linked glycan (1 site)"/>
</dbReference>
<dbReference type="iPTMnet" id="P48509"/>
<dbReference type="PhosphoSitePlus" id="P48509"/>
<dbReference type="SwissPalm" id="P48509"/>
<dbReference type="BioMuta" id="CD151"/>
<dbReference type="DMDM" id="85687560"/>
<dbReference type="jPOST" id="P48509"/>
<dbReference type="MassIVE" id="P48509"/>
<dbReference type="PaxDb" id="9606-ENSP00000380565"/>
<dbReference type="PeptideAtlas" id="P48509"/>
<dbReference type="ProteomicsDB" id="55898"/>
<dbReference type="Pumba" id="P48509"/>
<dbReference type="ABCD" id="P48509">
    <property type="antibodies" value="6 sequenced antibodies"/>
</dbReference>
<dbReference type="Antibodypedia" id="2778">
    <property type="antibodies" value="692 antibodies from 38 providers"/>
</dbReference>
<dbReference type="DNASU" id="977"/>
<dbReference type="Ensembl" id="ENST00000322008.9">
    <property type="protein sequence ID" value="ENSP00000324101.4"/>
    <property type="gene ID" value="ENSG00000177697.19"/>
</dbReference>
<dbReference type="Ensembl" id="ENST00000397420.9">
    <property type="protein sequence ID" value="ENSP00000380565.3"/>
    <property type="gene ID" value="ENSG00000177697.19"/>
</dbReference>
<dbReference type="Ensembl" id="ENST00000397421.5">
    <property type="protein sequence ID" value="ENSP00000380566.1"/>
    <property type="gene ID" value="ENSG00000177697.19"/>
</dbReference>
<dbReference type="Ensembl" id="ENST00000530726.5">
    <property type="protein sequence ID" value="ENSP00000432385.1"/>
    <property type="gene ID" value="ENSG00000177697.19"/>
</dbReference>
<dbReference type="GeneID" id="977"/>
<dbReference type="KEGG" id="hsa:977"/>
<dbReference type="MANE-Select" id="ENST00000397420.9">
    <property type="protein sequence ID" value="ENSP00000380565.3"/>
    <property type="RefSeq nucleotide sequence ID" value="NM_004357.5"/>
    <property type="RefSeq protein sequence ID" value="NP_004348.2"/>
</dbReference>
<dbReference type="UCSC" id="uc001lry.4">
    <property type="organism name" value="human"/>
</dbReference>
<dbReference type="AGR" id="HGNC:1630"/>
<dbReference type="CTD" id="977"/>
<dbReference type="DisGeNET" id="977"/>
<dbReference type="GeneCards" id="CD151"/>
<dbReference type="GeneReviews" id="CD151"/>
<dbReference type="HGNC" id="HGNC:1630">
    <property type="gene designation" value="CD151"/>
</dbReference>
<dbReference type="HPA" id="ENSG00000177697">
    <property type="expression patterns" value="Low tissue specificity"/>
</dbReference>
<dbReference type="MalaCards" id="CD151"/>
<dbReference type="MIM" id="179620">
    <property type="type" value="phenotype"/>
</dbReference>
<dbReference type="MIM" id="602243">
    <property type="type" value="gene"/>
</dbReference>
<dbReference type="MIM" id="609057">
    <property type="type" value="phenotype"/>
</dbReference>
<dbReference type="neXtProt" id="NX_P48509"/>
<dbReference type="OpenTargets" id="ENSG00000177697"/>
<dbReference type="Orphanet" id="300333">
    <property type="disease" value="Nephrotic syndrome-epidermolysis bullosa-sensorineural deafness syndrome"/>
</dbReference>
<dbReference type="PharmGKB" id="PA26189"/>
<dbReference type="VEuPathDB" id="HostDB:ENSG00000177697"/>
<dbReference type="eggNOG" id="KOG3882">
    <property type="taxonomic scope" value="Eukaryota"/>
</dbReference>
<dbReference type="GeneTree" id="ENSGT00940000157760"/>
<dbReference type="HOGENOM" id="CLU_055524_5_0_1"/>
<dbReference type="InParanoid" id="P48509"/>
<dbReference type="OMA" id="DSCCKTR"/>
<dbReference type="OrthoDB" id="438211at2759"/>
<dbReference type="PAN-GO" id="P48509">
    <property type="GO annotations" value="2 GO annotations based on evolutionary models"/>
</dbReference>
<dbReference type="PhylomeDB" id="P48509"/>
<dbReference type="TreeFam" id="TF352892"/>
<dbReference type="PathwayCommons" id="P48509"/>
<dbReference type="Reactome" id="R-HSA-2022090">
    <property type="pathway name" value="Assembly of collagen fibrils and other multimeric structures"/>
</dbReference>
<dbReference type="Reactome" id="R-HSA-446107">
    <property type="pathway name" value="Type I hemidesmosome assembly"/>
</dbReference>
<dbReference type="SignaLink" id="P48509"/>
<dbReference type="SIGNOR" id="P48509"/>
<dbReference type="BioGRID-ORCS" id="977">
    <property type="hits" value="29 hits in 1162 CRISPR screens"/>
</dbReference>
<dbReference type="ChiTaRS" id="CD151">
    <property type="organism name" value="human"/>
</dbReference>
<dbReference type="GeneWiki" id="CD151"/>
<dbReference type="GenomeRNAi" id="977"/>
<dbReference type="Pharos" id="P48509">
    <property type="development level" value="Tbio"/>
</dbReference>
<dbReference type="PRO" id="PR:P48509"/>
<dbReference type="Proteomes" id="UP000005640">
    <property type="component" value="Chromosome 11"/>
</dbReference>
<dbReference type="RNAct" id="P48509">
    <property type="molecule type" value="protein"/>
</dbReference>
<dbReference type="Bgee" id="ENSG00000177697">
    <property type="expression patterns" value="Expressed in descending thoracic aorta and 187 other cell types or tissues"/>
</dbReference>
<dbReference type="ExpressionAtlas" id="P48509">
    <property type="expression patterns" value="baseline and differential"/>
</dbReference>
<dbReference type="GO" id="GO:0005604">
    <property type="term" value="C:basement membrane"/>
    <property type="evidence" value="ECO:0000314"/>
    <property type="project" value="CACAO"/>
</dbReference>
<dbReference type="GO" id="GO:0009986">
    <property type="term" value="C:cell surface"/>
    <property type="evidence" value="ECO:0000314"/>
    <property type="project" value="MGI"/>
</dbReference>
<dbReference type="GO" id="GO:0005829">
    <property type="term" value="C:cytosol"/>
    <property type="evidence" value="ECO:0000304"/>
    <property type="project" value="Reactome"/>
</dbReference>
<dbReference type="GO" id="GO:0005925">
    <property type="term" value="C:focal adhesion"/>
    <property type="evidence" value="ECO:0007005"/>
    <property type="project" value="UniProtKB"/>
</dbReference>
<dbReference type="GO" id="GO:0016020">
    <property type="term" value="C:membrane"/>
    <property type="evidence" value="ECO:0000304"/>
    <property type="project" value="ProtInc"/>
</dbReference>
<dbReference type="GO" id="GO:0005886">
    <property type="term" value="C:plasma membrane"/>
    <property type="evidence" value="ECO:0000318"/>
    <property type="project" value="GO_Central"/>
</dbReference>
<dbReference type="GO" id="GO:0005178">
    <property type="term" value="F:integrin binding"/>
    <property type="evidence" value="ECO:0000314"/>
    <property type="project" value="UniProtKB"/>
</dbReference>
<dbReference type="GO" id="GO:0007155">
    <property type="term" value="P:cell adhesion"/>
    <property type="evidence" value="ECO:0000303"/>
    <property type="project" value="ProtInc"/>
</dbReference>
<dbReference type="GO" id="GO:0016477">
    <property type="term" value="P:cell migration"/>
    <property type="evidence" value="ECO:0000318"/>
    <property type="project" value="GO_Central"/>
</dbReference>
<dbReference type="GO" id="GO:0030335">
    <property type="term" value="P:positive regulation of cell migration"/>
    <property type="evidence" value="ECO:0000314"/>
    <property type="project" value="MGI"/>
</dbReference>
<dbReference type="GO" id="GO:0045807">
    <property type="term" value="P:positive regulation of endocytosis"/>
    <property type="evidence" value="ECO:0000314"/>
    <property type="project" value="MGI"/>
</dbReference>
<dbReference type="GO" id="GO:0042098">
    <property type="term" value="P:T cell proliferation"/>
    <property type="evidence" value="ECO:0007669"/>
    <property type="project" value="Ensembl"/>
</dbReference>
<dbReference type="GO" id="GO:0044319">
    <property type="term" value="P:wound healing, spreading of cells"/>
    <property type="evidence" value="ECO:0000314"/>
    <property type="project" value="MGI"/>
</dbReference>
<dbReference type="CDD" id="cd03155">
    <property type="entry name" value="CD151_like_LEL"/>
    <property type="match status" value="1"/>
</dbReference>
<dbReference type="FunFam" id="1.10.1450.10:FF:000005">
    <property type="entry name" value="Tetraspanin"/>
    <property type="match status" value="1"/>
</dbReference>
<dbReference type="Gene3D" id="1.10.1450.10">
    <property type="entry name" value="Tetraspanin"/>
    <property type="match status" value="1"/>
</dbReference>
<dbReference type="InterPro" id="IPR018499">
    <property type="entry name" value="Tetraspanin/Peripherin"/>
</dbReference>
<dbReference type="InterPro" id="IPR000301">
    <property type="entry name" value="Tetraspanin_animals"/>
</dbReference>
<dbReference type="InterPro" id="IPR018503">
    <property type="entry name" value="Tetraspanin_CS"/>
</dbReference>
<dbReference type="InterPro" id="IPR008952">
    <property type="entry name" value="Tetraspanin_EC2_sf"/>
</dbReference>
<dbReference type="PANTHER" id="PTHR19282:SF487">
    <property type="entry name" value="CD151 ANTIGEN"/>
    <property type="match status" value="1"/>
</dbReference>
<dbReference type="PANTHER" id="PTHR19282">
    <property type="entry name" value="TETRASPANIN"/>
    <property type="match status" value="1"/>
</dbReference>
<dbReference type="Pfam" id="PF00335">
    <property type="entry name" value="Tetraspanin"/>
    <property type="match status" value="1"/>
</dbReference>
<dbReference type="PIRSF" id="PIRSF002419">
    <property type="entry name" value="Tetraspanin"/>
    <property type="match status" value="1"/>
</dbReference>
<dbReference type="PRINTS" id="PR00259">
    <property type="entry name" value="TMFOUR"/>
</dbReference>
<dbReference type="SUPFAM" id="SSF48652">
    <property type="entry name" value="Tetraspanin"/>
    <property type="match status" value="1"/>
</dbReference>
<dbReference type="PROSITE" id="PS00421">
    <property type="entry name" value="TM4_1"/>
    <property type="match status" value="1"/>
</dbReference>
<keyword id="KW-0095">Blood group antigen</keyword>
<keyword id="KW-1003">Cell membrane</keyword>
<keyword id="KW-0209">Deafness</keyword>
<keyword id="KW-0263">Epidermolysis bullosa</keyword>
<keyword id="KW-0325">Glycoprotein</keyword>
<keyword id="KW-0945">Host-virus interaction</keyword>
<keyword id="KW-0449">Lipoprotein</keyword>
<keyword id="KW-0472">Membrane</keyword>
<keyword id="KW-0564">Palmitate</keyword>
<keyword id="KW-1267">Proteomics identification</keyword>
<keyword id="KW-1185">Reference proteome</keyword>
<keyword id="KW-0812">Transmembrane</keyword>
<keyword id="KW-1133">Transmembrane helix</keyword>
<keyword id="KW-0832">Ubl conjugation</keyword>